<sequence>MANSEQAYWLAWSQVKGVGPVLLKRLAQHFELLENAWKARPIALGEVEGFGHKMIEKIIGQRNNLNPFQFLEEHQQKNPQFLTPDDPDYPRLLWEIPSPPPVLYYLGRLDHRESQGQIPGVGIVGTRYPTDHGSRWTRKISQALVKSGFTIVSGLAAGIDADAHSSCLRVNGRTIAVLGTGLDLIYPPQNRQLFEQIAAEGLILSEYPVGSKPERGNFPARNRIIAGLSRAVLVMEAPPKSGALITAKYANEFNRDVFSLPNSPDVQEAHGCLNLIHNGAEVILSENQLLASLGAIPLLDQGQEQKILPGDRQIGYLDQTNVPTLTTGARGKQPLTEPPEDLEPTLKKILAAVQEEPTALDQIVAVTALAIGDVSAGLLQLEILGLVSQEPGMRYQRR</sequence>
<feature type="chain" id="PRO_0000209159" description="Protein Smf">
    <location>
        <begin position="1"/>
        <end position="398"/>
    </location>
</feature>
<accession>P73345</accession>
<protein>
    <recommendedName>
        <fullName>Protein Smf</fullName>
    </recommendedName>
</protein>
<gene>
    <name type="primary">smf</name>
    <name type="ordered locus">slr1197</name>
</gene>
<name>SMF_SYNY3</name>
<dbReference type="EMBL" id="BA000022">
    <property type="protein sequence ID" value="BAA17376.1"/>
    <property type="molecule type" value="Genomic_DNA"/>
</dbReference>
<dbReference type="PIR" id="S77529">
    <property type="entry name" value="S77529"/>
</dbReference>
<dbReference type="SMR" id="P73345"/>
<dbReference type="FunCoup" id="P73345">
    <property type="interactions" value="279"/>
</dbReference>
<dbReference type="STRING" id="1148.gene:10498239"/>
<dbReference type="PaxDb" id="1148-1652454"/>
<dbReference type="EnsemblBacteria" id="BAA17376">
    <property type="protein sequence ID" value="BAA17376"/>
    <property type="gene ID" value="BAA17376"/>
</dbReference>
<dbReference type="KEGG" id="syn:slr1197"/>
<dbReference type="eggNOG" id="COG0272">
    <property type="taxonomic scope" value="Bacteria"/>
</dbReference>
<dbReference type="eggNOG" id="COG0758">
    <property type="taxonomic scope" value="Bacteria"/>
</dbReference>
<dbReference type="InParanoid" id="P73345"/>
<dbReference type="PhylomeDB" id="P73345"/>
<dbReference type="Proteomes" id="UP000001425">
    <property type="component" value="Chromosome"/>
</dbReference>
<dbReference type="GO" id="GO:0009294">
    <property type="term" value="P:DNA-mediated transformation"/>
    <property type="evidence" value="ECO:0007669"/>
    <property type="project" value="InterPro"/>
</dbReference>
<dbReference type="Gene3D" id="3.40.50.450">
    <property type="match status" value="1"/>
</dbReference>
<dbReference type="Gene3D" id="1.10.10.10">
    <property type="entry name" value="Winged helix-like DNA-binding domain superfamily/Winged helix DNA-binding domain"/>
    <property type="match status" value="1"/>
</dbReference>
<dbReference type="InterPro" id="IPR003488">
    <property type="entry name" value="DprA"/>
</dbReference>
<dbReference type="InterPro" id="IPR041614">
    <property type="entry name" value="DprA_WH"/>
</dbReference>
<dbReference type="InterPro" id="IPR010994">
    <property type="entry name" value="RuvA_2-like"/>
</dbReference>
<dbReference type="InterPro" id="IPR036388">
    <property type="entry name" value="WH-like_DNA-bd_sf"/>
</dbReference>
<dbReference type="NCBIfam" id="TIGR00732">
    <property type="entry name" value="dprA"/>
    <property type="match status" value="1"/>
</dbReference>
<dbReference type="PANTHER" id="PTHR43022">
    <property type="entry name" value="PROTEIN SMF"/>
    <property type="match status" value="1"/>
</dbReference>
<dbReference type="PANTHER" id="PTHR43022:SF1">
    <property type="entry name" value="PROTEIN SMF"/>
    <property type="match status" value="1"/>
</dbReference>
<dbReference type="Pfam" id="PF02481">
    <property type="entry name" value="DNA_processg_A"/>
    <property type="match status" value="1"/>
</dbReference>
<dbReference type="Pfam" id="PF17782">
    <property type="entry name" value="DprA_WH"/>
    <property type="match status" value="1"/>
</dbReference>
<dbReference type="SUPFAM" id="SSF102405">
    <property type="entry name" value="MCP/YpsA-like"/>
    <property type="match status" value="1"/>
</dbReference>
<dbReference type="SUPFAM" id="SSF47781">
    <property type="entry name" value="RuvA domain 2-like"/>
    <property type="match status" value="1"/>
</dbReference>
<evidence type="ECO:0000250" key="1">
    <source>
        <dbReference type="UniProtKB" id="Q8DPI7"/>
    </source>
</evidence>
<evidence type="ECO:0000305" key="2"/>
<reference key="1">
    <citation type="journal article" date="1996" name="DNA Res.">
        <title>Sequence analysis of the genome of the unicellular cyanobacterium Synechocystis sp. strain PCC6803. II. Sequence determination of the entire genome and assignment of potential protein-coding regions.</title>
        <authorList>
            <person name="Kaneko T."/>
            <person name="Sato S."/>
            <person name="Kotani H."/>
            <person name="Tanaka A."/>
            <person name="Asamizu E."/>
            <person name="Nakamura Y."/>
            <person name="Miyajima N."/>
            <person name="Hirosawa M."/>
            <person name="Sugiura M."/>
            <person name="Sasamoto S."/>
            <person name="Kimura T."/>
            <person name="Hosouchi T."/>
            <person name="Matsuno A."/>
            <person name="Muraki A."/>
            <person name="Nakazaki N."/>
            <person name="Naruo K."/>
            <person name="Okumura S."/>
            <person name="Shimpo S."/>
            <person name="Takeuchi C."/>
            <person name="Wada T."/>
            <person name="Watanabe A."/>
            <person name="Yamada M."/>
            <person name="Yasuda M."/>
            <person name="Tabata S."/>
        </authorList>
    </citation>
    <scope>NUCLEOTIDE SEQUENCE [LARGE SCALE GENOMIC DNA]</scope>
    <source>
        <strain>ATCC 27184 / PCC 6803 / Kazusa</strain>
    </source>
</reference>
<proteinExistence type="inferred from homology"/>
<keyword id="KW-1185">Reference proteome</keyword>
<comment type="function">
    <text evidence="1">May help load RecA onto ssDNA (By similarity).</text>
</comment>
<comment type="similarity">
    <text evidence="2">Belongs to the DprA/Smf family.</text>
</comment>
<organism>
    <name type="scientific">Synechocystis sp. (strain ATCC 27184 / PCC 6803 / Kazusa)</name>
    <dbReference type="NCBI Taxonomy" id="1111708"/>
    <lineage>
        <taxon>Bacteria</taxon>
        <taxon>Bacillati</taxon>
        <taxon>Cyanobacteriota</taxon>
        <taxon>Cyanophyceae</taxon>
        <taxon>Synechococcales</taxon>
        <taxon>Merismopediaceae</taxon>
        <taxon>Synechocystis</taxon>
    </lineage>
</organism>